<name>DDL_VIBC3</name>
<protein>
    <recommendedName>
        <fullName evidence="2">D-alanine--D-alanine ligase</fullName>
        <ecNumber evidence="2">6.3.2.4</ecNumber>
    </recommendedName>
    <alternativeName>
        <fullName evidence="2">D-Ala-D-Ala ligase</fullName>
    </alternativeName>
    <alternativeName>
        <fullName evidence="2">D-alanylalanine synthetase</fullName>
    </alternativeName>
</protein>
<dbReference type="EC" id="6.3.2.4" evidence="2"/>
<dbReference type="EMBL" id="CP000626">
    <property type="protein sequence ID" value="ABQ18505.1"/>
    <property type="molecule type" value="Genomic_DNA"/>
</dbReference>
<dbReference type="EMBL" id="CP001236">
    <property type="protein sequence ID" value="ACP11577.1"/>
    <property type="molecule type" value="Genomic_DNA"/>
</dbReference>
<dbReference type="RefSeq" id="WP_000169442.1">
    <property type="nucleotide sequence ID" value="NZ_JAACZH010000046.1"/>
</dbReference>
<dbReference type="SMR" id="A5F083"/>
<dbReference type="KEGG" id="vco:VC0395_0515"/>
<dbReference type="KEGG" id="vcr:VC395_A0743"/>
<dbReference type="PATRIC" id="fig|345073.21.peg.3476"/>
<dbReference type="eggNOG" id="COG1181">
    <property type="taxonomic scope" value="Bacteria"/>
</dbReference>
<dbReference type="HOGENOM" id="CLU_039268_0_0_6"/>
<dbReference type="OrthoDB" id="9813261at2"/>
<dbReference type="UniPathway" id="UPA00219"/>
<dbReference type="Proteomes" id="UP000000249">
    <property type="component" value="Chromosome 1"/>
</dbReference>
<dbReference type="GO" id="GO:0005829">
    <property type="term" value="C:cytosol"/>
    <property type="evidence" value="ECO:0007669"/>
    <property type="project" value="TreeGrafter"/>
</dbReference>
<dbReference type="GO" id="GO:0005524">
    <property type="term" value="F:ATP binding"/>
    <property type="evidence" value="ECO:0007669"/>
    <property type="project" value="UniProtKB-KW"/>
</dbReference>
<dbReference type="GO" id="GO:0008716">
    <property type="term" value="F:D-alanine-D-alanine ligase activity"/>
    <property type="evidence" value="ECO:0007669"/>
    <property type="project" value="UniProtKB-UniRule"/>
</dbReference>
<dbReference type="GO" id="GO:0046872">
    <property type="term" value="F:metal ion binding"/>
    <property type="evidence" value="ECO:0007669"/>
    <property type="project" value="UniProtKB-KW"/>
</dbReference>
<dbReference type="GO" id="GO:0071555">
    <property type="term" value="P:cell wall organization"/>
    <property type="evidence" value="ECO:0007669"/>
    <property type="project" value="UniProtKB-KW"/>
</dbReference>
<dbReference type="GO" id="GO:0009252">
    <property type="term" value="P:peptidoglycan biosynthetic process"/>
    <property type="evidence" value="ECO:0007669"/>
    <property type="project" value="UniProtKB-UniRule"/>
</dbReference>
<dbReference type="GO" id="GO:0008360">
    <property type="term" value="P:regulation of cell shape"/>
    <property type="evidence" value="ECO:0007669"/>
    <property type="project" value="UniProtKB-KW"/>
</dbReference>
<dbReference type="FunFam" id="3.30.1490.20:FF:000034">
    <property type="entry name" value="D-alanine--D-alanine ligase"/>
    <property type="match status" value="1"/>
</dbReference>
<dbReference type="FunFam" id="3.30.470.20:FF:000088">
    <property type="entry name" value="D-alanine--D-alanine ligase"/>
    <property type="match status" value="1"/>
</dbReference>
<dbReference type="FunFam" id="3.40.50.20:FF:000034">
    <property type="entry name" value="D-alanine--D-alanine ligase"/>
    <property type="match status" value="1"/>
</dbReference>
<dbReference type="Gene3D" id="3.40.50.20">
    <property type="match status" value="1"/>
</dbReference>
<dbReference type="Gene3D" id="3.30.1490.20">
    <property type="entry name" value="ATP-grasp fold, A domain"/>
    <property type="match status" value="1"/>
</dbReference>
<dbReference type="Gene3D" id="3.30.470.20">
    <property type="entry name" value="ATP-grasp fold, B domain"/>
    <property type="match status" value="1"/>
</dbReference>
<dbReference type="HAMAP" id="MF_00047">
    <property type="entry name" value="Dala_Dala_lig"/>
    <property type="match status" value="1"/>
</dbReference>
<dbReference type="InterPro" id="IPR011761">
    <property type="entry name" value="ATP-grasp"/>
</dbReference>
<dbReference type="InterPro" id="IPR013815">
    <property type="entry name" value="ATP_grasp_subdomain_1"/>
</dbReference>
<dbReference type="InterPro" id="IPR000291">
    <property type="entry name" value="D-Ala_lig_Van_CS"/>
</dbReference>
<dbReference type="InterPro" id="IPR005905">
    <property type="entry name" value="D_ala_D_ala"/>
</dbReference>
<dbReference type="InterPro" id="IPR011095">
    <property type="entry name" value="Dala_Dala_lig_C"/>
</dbReference>
<dbReference type="InterPro" id="IPR011127">
    <property type="entry name" value="Dala_Dala_lig_N"/>
</dbReference>
<dbReference type="InterPro" id="IPR016185">
    <property type="entry name" value="PreATP-grasp_dom_sf"/>
</dbReference>
<dbReference type="NCBIfam" id="TIGR01205">
    <property type="entry name" value="D_ala_D_alaTIGR"/>
    <property type="match status" value="1"/>
</dbReference>
<dbReference type="NCBIfam" id="NF002527">
    <property type="entry name" value="PRK01966.1-3"/>
    <property type="match status" value="1"/>
</dbReference>
<dbReference type="NCBIfam" id="NF002528">
    <property type="entry name" value="PRK01966.1-4"/>
    <property type="match status" value="1"/>
</dbReference>
<dbReference type="PANTHER" id="PTHR23132">
    <property type="entry name" value="D-ALANINE--D-ALANINE LIGASE"/>
    <property type="match status" value="1"/>
</dbReference>
<dbReference type="PANTHER" id="PTHR23132:SF25">
    <property type="entry name" value="D-ALANINE--D-ALANINE LIGASE A"/>
    <property type="match status" value="1"/>
</dbReference>
<dbReference type="Pfam" id="PF07478">
    <property type="entry name" value="Dala_Dala_lig_C"/>
    <property type="match status" value="1"/>
</dbReference>
<dbReference type="Pfam" id="PF01820">
    <property type="entry name" value="Dala_Dala_lig_N"/>
    <property type="match status" value="1"/>
</dbReference>
<dbReference type="PIRSF" id="PIRSF039102">
    <property type="entry name" value="Ddl/VanB"/>
    <property type="match status" value="1"/>
</dbReference>
<dbReference type="SUPFAM" id="SSF56059">
    <property type="entry name" value="Glutathione synthetase ATP-binding domain-like"/>
    <property type="match status" value="1"/>
</dbReference>
<dbReference type="SUPFAM" id="SSF52440">
    <property type="entry name" value="PreATP-grasp domain"/>
    <property type="match status" value="1"/>
</dbReference>
<dbReference type="PROSITE" id="PS50975">
    <property type="entry name" value="ATP_GRASP"/>
    <property type="match status" value="1"/>
</dbReference>
<dbReference type="PROSITE" id="PS00843">
    <property type="entry name" value="DALA_DALA_LIGASE_1"/>
    <property type="match status" value="1"/>
</dbReference>
<dbReference type="PROSITE" id="PS00844">
    <property type="entry name" value="DALA_DALA_LIGASE_2"/>
    <property type="match status" value="1"/>
</dbReference>
<evidence type="ECO:0000250" key="1"/>
<evidence type="ECO:0000255" key="2">
    <source>
        <dbReference type="HAMAP-Rule" id="MF_00047"/>
    </source>
</evidence>
<gene>
    <name evidence="2" type="primary">ddl</name>
    <name type="synonym">ddlA</name>
    <name type="ordered locus">VC0395_0515</name>
    <name type="ordered locus">VC395_A0743</name>
</gene>
<proteinExistence type="inferred from homology"/>
<organism>
    <name type="scientific">Vibrio cholerae serotype O1 (strain ATCC 39541 / Classical Ogawa 395 / O395)</name>
    <dbReference type="NCBI Taxonomy" id="345073"/>
    <lineage>
        <taxon>Bacteria</taxon>
        <taxon>Pseudomonadati</taxon>
        <taxon>Pseudomonadota</taxon>
        <taxon>Gammaproteobacteria</taxon>
        <taxon>Vibrionales</taxon>
        <taxon>Vibrionaceae</taxon>
        <taxon>Vibrio</taxon>
    </lineage>
</organism>
<keyword id="KW-0067">ATP-binding</keyword>
<keyword id="KW-0133">Cell shape</keyword>
<keyword id="KW-0961">Cell wall biogenesis/degradation</keyword>
<keyword id="KW-0963">Cytoplasm</keyword>
<keyword id="KW-0436">Ligase</keyword>
<keyword id="KW-0460">Magnesium</keyword>
<keyword id="KW-0464">Manganese</keyword>
<keyword id="KW-0479">Metal-binding</keyword>
<keyword id="KW-0547">Nucleotide-binding</keyword>
<keyword id="KW-0573">Peptidoglycan synthesis</keyword>
<accession>A5F083</accession>
<accession>C3M614</accession>
<feature type="chain" id="PRO_1000074803" description="D-alanine--D-alanine ligase">
    <location>
        <begin position="1"/>
        <end position="329"/>
    </location>
</feature>
<feature type="domain" description="ATP-grasp" evidence="2">
    <location>
        <begin position="121"/>
        <end position="327"/>
    </location>
</feature>
<feature type="binding site" evidence="2">
    <location>
        <begin position="151"/>
        <end position="206"/>
    </location>
    <ligand>
        <name>ATP</name>
        <dbReference type="ChEBI" id="CHEBI:30616"/>
    </ligand>
</feature>
<feature type="binding site" evidence="2">
    <location>
        <position position="281"/>
    </location>
    <ligand>
        <name>Mg(2+)</name>
        <dbReference type="ChEBI" id="CHEBI:18420"/>
        <label>1</label>
    </ligand>
</feature>
<feature type="binding site" evidence="2">
    <location>
        <position position="294"/>
    </location>
    <ligand>
        <name>Mg(2+)</name>
        <dbReference type="ChEBI" id="CHEBI:18420"/>
        <label>1</label>
    </ligand>
</feature>
<feature type="binding site" evidence="2">
    <location>
        <position position="294"/>
    </location>
    <ligand>
        <name>Mg(2+)</name>
        <dbReference type="ChEBI" id="CHEBI:18420"/>
        <label>2</label>
    </ligand>
</feature>
<feature type="binding site" evidence="2">
    <location>
        <position position="296"/>
    </location>
    <ligand>
        <name>Mg(2+)</name>
        <dbReference type="ChEBI" id="CHEBI:18420"/>
        <label>2</label>
    </ligand>
</feature>
<reference key="1">
    <citation type="submission" date="2007-03" db="EMBL/GenBank/DDBJ databases">
        <authorList>
            <person name="Heidelberg J."/>
        </authorList>
    </citation>
    <scope>NUCLEOTIDE SEQUENCE [LARGE SCALE GENOMIC DNA]</scope>
    <source>
        <strain>ATCC 39541 / Classical Ogawa 395 / O395</strain>
    </source>
</reference>
<reference key="2">
    <citation type="journal article" date="2008" name="PLoS ONE">
        <title>A recalibrated molecular clock and independent origins for the cholera pandemic clones.</title>
        <authorList>
            <person name="Feng L."/>
            <person name="Reeves P.R."/>
            <person name="Lan R."/>
            <person name="Ren Y."/>
            <person name="Gao C."/>
            <person name="Zhou Z."/>
            <person name="Ren Y."/>
            <person name="Cheng J."/>
            <person name="Wang W."/>
            <person name="Wang J."/>
            <person name="Qian W."/>
            <person name="Li D."/>
            <person name="Wang L."/>
        </authorList>
    </citation>
    <scope>NUCLEOTIDE SEQUENCE [LARGE SCALE GENOMIC DNA]</scope>
    <source>
        <strain>ATCC 39541 / Classical Ogawa 395 / O395</strain>
    </source>
</reference>
<sequence length="329" mass="36765">MTKTTILLLCGGGSSEHEISLVSANYIQQQLELTPEFHVIRVEMKKEGWFSEQGALVYLDTNSATLNSDKASYPIDFVVPCIHGFPGETGDIQSMLELAGIPYLGCGPEASANSFNKITSKLWYDALDIPNTPYLFLTQNTPSSIDKAKQAFGHWGSIFVKAARQGSSVGCYKVTTEDQIAPAIEAAFGFSEQVLVEQAVKPRELEVSAYEMNGKLYISKPGEVIAPEGTFYSYEEKYSANSHARTVLEAENLTEKHKELIQTYAERVFIHMKLRHLSRIDFFLTQEGQIYLNEVNTFPGMTPISMFPKMLEHNGHRFSEFLAQCVTNT</sequence>
<comment type="function">
    <text evidence="2">Cell wall formation.</text>
</comment>
<comment type="catalytic activity">
    <reaction evidence="2">
        <text>2 D-alanine + ATP = D-alanyl-D-alanine + ADP + phosphate + H(+)</text>
        <dbReference type="Rhea" id="RHEA:11224"/>
        <dbReference type="ChEBI" id="CHEBI:15378"/>
        <dbReference type="ChEBI" id="CHEBI:30616"/>
        <dbReference type="ChEBI" id="CHEBI:43474"/>
        <dbReference type="ChEBI" id="CHEBI:57416"/>
        <dbReference type="ChEBI" id="CHEBI:57822"/>
        <dbReference type="ChEBI" id="CHEBI:456216"/>
        <dbReference type="EC" id="6.3.2.4"/>
    </reaction>
</comment>
<comment type="cofactor">
    <cofactor evidence="1">
        <name>Mg(2+)</name>
        <dbReference type="ChEBI" id="CHEBI:18420"/>
    </cofactor>
    <cofactor evidence="1">
        <name>Mn(2+)</name>
        <dbReference type="ChEBI" id="CHEBI:29035"/>
    </cofactor>
    <text evidence="1">Binds 2 magnesium or manganese ions per subunit.</text>
</comment>
<comment type="pathway">
    <text evidence="2">Cell wall biogenesis; peptidoglycan biosynthesis.</text>
</comment>
<comment type="subcellular location">
    <subcellularLocation>
        <location evidence="2">Cytoplasm</location>
    </subcellularLocation>
</comment>
<comment type="similarity">
    <text evidence="2">Belongs to the D-alanine--D-alanine ligase family.</text>
</comment>